<gene>
    <name evidence="1" type="primary">ycgL</name>
    <name type="ordered locus">ECUMN_1468</name>
</gene>
<evidence type="ECO:0000255" key="1">
    <source>
        <dbReference type="HAMAP-Rule" id="MF_01866"/>
    </source>
</evidence>
<name>YCGL_ECOLU</name>
<proteinExistence type="inferred from homology"/>
<feature type="chain" id="PRO_0000375298" description="Protein YcgL">
    <location>
        <begin position="1"/>
        <end position="108"/>
    </location>
</feature>
<feature type="domain" description="YcgL" evidence="1">
    <location>
        <begin position="12"/>
        <end position="96"/>
    </location>
</feature>
<sequence length="108" mass="12437">MPKPGILKSKSMFCVIYRSSKRDQTYLYVEKKDDFSRVPEELMKGFGQPQLAMILPLDGRKKLVNADIEKVKQALTEQGYYLQLPPPPEDLLKQHLSVMGQKTHDTNK</sequence>
<organism>
    <name type="scientific">Escherichia coli O17:K52:H18 (strain UMN026 / ExPEC)</name>
    <dbReference type="NCBI Taxonomy" id="585056"/>
    <lineage>
        <taxon>Bacteria</taxon>
        <taxon>Pseudomonadati</taxon>
        <taxon>Pseudomonadota</taxon>
        <taxon>Gammaproteobacteria</taxon>
        <taxon>Enterobacterales</taxon>
        <taxon>Enterobacteriaceae</taxon>
        <taxon>Escherichia</taxon>
    </lineage>
</organism>
<dbReference type="EMBL" id="CU928163">
    <property type="protein sequence ID" value="CAR12676.1"/>
    <property type="molecule type" value="Genomic_DNA"/>
</dbReference>
<dbReference type="RefSeq" id="YP_002412213.1">
    <property type="nucleotide sequence ID" value="NC_011751.1"/>
</dbReference>
<dbReference type="SMR" id="B7N3Y3"/>
<dbReference type="STRING" id="585056.ECUMN_1468"/>
<dbReference type="KEGG" id="eum:ECUMN_1468"/>
<dbReference type="PATRIC" id="fig|585056.7.peg.1664"/>
<dbReference type="HOGENOM" id="CLU_155118_1_0_6"/>
<dbReference type="Proteomes" id="UP000007097">
    <property type="component" value="Chromosome"/>
</dbReference>
<dbReference type="Gene3D" id="3.10.510.20">
    <property type="entry name" value="YcgL domain"/>
    <property type="match status" value="1"/>
</dbReference>
<dbReference type="HAMAP" id="MF_01866">
    <property type="entry name" value="UPF0745"/>
    <property type="match status" value="1"/>
</dbReference>
<dbReference type="InterPro" id="IPR038068">
    <property type="entry name" value="YcgL-like_sf"/>
</dbReference>
<dbReference type="InterPro" id="IPR027354">
    <property type="entry name" value="YcgL_dom"/>
</dbReference>
<dbReference type="PANTHER" id="PTHR38109">
    <property type="entry name" value="PROTEIN YCGL"/>
    <property type="match status" value="1"/>
</dbReference>
<dbReference type="PANTHER" id="PTHR38109:SF1">
    <property type="entry name" value="PROTEIN YCGL"/>
    <property type="match status" value="1"/>
</dbReference>
<dbReference type="Pfam" id="PF05166">
    <property type="entry name" value="YcgL"/>
    <property type="match status" value="1"/>
</dbReference>
<dbReference type="SUPFAM" id="SSF160191">
    <property type="entry name" value="YcgL-like"/>
    <property type="match status" value="1"/>
</dbReference>
<dbReference type="PROSITE" id="PS51648">
    <property type="entry name" value="YCGL"/>
    <property type="match status" value="1"/>
</dbReference>
<accession>B7N3Y3</accession>
<protein>
    <recommendedName>
        <fullName evidence="1">Protein YcgL</fullName>
    </recommendedName>
</protein>
<reference key="1">
    <citation type="journal article" date="2009" name="PLoS Genet.">
        <title>Organised genome dynamics in the Escherichia coli species results in highly diverse adaptive paths.</title>
        <authorList>
            <person name="Touchon M."/>
            <person name="Hoede C."/>
            <person name="Tenaillon O."/>
            <person name="Barbe V."/>
            <person name="Baeriswyl S."/>
            <person name="Bidet P."/>
            <person name="Bingen E."/>
            <person name="Bonacorsi S."/>
            <person name="Bouchier C."/>
            <person name="Bouvet O."/>
            <person name="Calteau A."/>
            <person name="Chiapello H."/>
            <person name="Clermont O."/>
            <person name="Cruveiller S."/>
            <person name="Danchin A."/>
            <person name="Diard M."/>
            <person name="Dossat C."/>
            <person name="Karoui M.E."/>
            <person name="Frapy E."/>
            <person name="Garry L."/>
            <person name="Ghigo J.M."/>
            <person name="Gilles A.M."/>
            <person name="Johnson J."/>
            <person name="Le Bouguenec C."/>
            <person name="Lescat M."/>
            <person name="Mangenot S."/>
            <person name="Martinez-Jehanne V."/>
            <person name="Matic I."/>
            <person name="Nassif X."/>
            <person name="Oztas S."/>
            <person name="Petit M.A."/>
            <person name="Pichon C."/>
            <person name="Rouy Z."/>
            <person name="Ruf C.S."/>
            <person name="Schneider D."/>
            <person name="Tourret J."/>
            <person name="Vacherie B."/>
            <person name="Vallenet D."/>
            <person name="Medigue C."/>
            <person name="Rocha E.P.C."/>
            <person name="Denamur E."/>
        </authorList>
    </citation>
    <scope>NUCLEOTIDE SEQUENCE [LARGE SCALE GENOMIC DNA]</scope>
    <source>
        <strain>UMN026 / ExPEC</strain>
    </source>
</reference>